<proteinExistence type="inferred from homology"/>
<evidence type="ECO:0000255" key="1">
    <source>
        <dbReference type="HAMAP-Rule" id="MF_01382"/>
    </source>
</evidence>
<accession>Q55357</accession>
<accession>Q31RJ8</accession>
<reference key="1">
    <citation type="journal article" date="1994" name="Biochem. Biophys. Res. Commun.">
        <title>Identification and characterization of the sec-A protein homologue in the cyanobacterium Synechococcus PCC7942.</title>
        <authorList>
            <person name="Nakai M."/>
            <person name="Nohara T."/>
            <person name="Sogita D."/>
            <person name="Endo T."/>
        </authorList>
    </citation>
    <scope>NUCLEOTIDE SEQUENCE [GENOMIC DNA]</scope>
</reference>
<reference key="2">
    <citation type="submission" date="2005-08" db="EMBL/GenBank/DDBJ databases">
        <title>Complete sequence of chromosome 1 of Synechococcus elongatus PCC 7942.</title>
        <authorList>
            <consortium name="US DOE Joint Genome Institute"/>
            <person name="Copeland A."/>
            <person name="Lucas S."/>
            <person name="Lapidus A."/>
            <person name="Barry K."/>
            <person name="Detter J.C."/>
            <person name="Glavina T."/>
            <person name="Hammon N."/>
            <person name="Israni S."/>
            <person name="Pitluck S."/>
            <person name="Schmutz J."/>
            <person name="Larimer F."/>
            <person name="Land M."/>
            <person name="Kyrpides N."/>
            <person name="Lykidis A."/>
            <person name="Golden S."/>
            <person name="Richardson P."/>
        </authorList>
    </citation>
    <scope>NUCLEOTIDE SEQUENCE [LARGE SCALE GENOMIC DNA]</scope>
    <source>
        <strain>ATCC 33912 / PCC 7942 / FACHB-805</strain>
    </source>
</reference>
<protein>
    <recommendedName>
        <fullName evidence="1">Protein translocase subunit SecA</fullName>
        <ecNumber evidence="1">7.4.2.8</ecNumber>
    </recommendedName>
</protein>
<sequence length="948" mass="107258">MLNLLLGDPNVRKVKKYKPLVTEINLLEEDIEPLSDKDLIAKTAEFRQKLDKVSHSPAAEKELLAELLPEAFAVMREASKRVLGLRHFDVQMIGGMILHDGQIAEMKTGEGKTLVATLPSYLNALSGKGAHVVTVNDYLARRDAEWMGQVHRFLGLSVGLIQQGMSPEERRRNYNCDITYATNSELGFDYLRDNMAAVIEEVVQRPFNYAVIDEVDSILIDEARTPLIISGQVDRPSEKYMRASEVAALLQRSTNTDSEEEPDGDYEVDEKGRNVLLTDQGFINAEQLLGVSDLFDSNDPWAHYIFNAIKAKELFIKDVNYIVRGGEIVIVDEFTGRVMPGRRWSDGLHQAVESKEGVEIQPETQTLASITYQNFFLLYPKLSGMTGTAKTEELEFEKTYKLEVTVVPTNRVSRRRDQPDVVYKTEIGKWRAIAADCAELHAEGRPVLVGTTSVEKSEFLSQLLNEQGIPHNLLNAKPENVEREAEIVAQAGRRGAVTISTNMAGRGTDIILGGNADYMARLKLREYWMPQLVSFEEDGFGIAGVAGLEGGRPAAQGFGSPNGQKPRKTWKASSDIFPAELSTEAEKLLKAAVDLGVKTYGGNSLSELVAEDKIATAAEKAPTDDPVIQKLREAYQQVRKEYEAVTKQEQAEVVELGGLHVIGTERHESRRVDNQLRGRAGRQGDPGSTRFFLSLEDNLLRIFGGDRVAKLMNAFRVEEDMPIESGMLTRSLEGAQKKVETYYYDIRKQVFEYDEVMNNQRRAIYAERRRVLEGRELKEQVIQYGERTMDEIVDAHINVDLPSEEWDLEKLVNKVKQFVYLLEDLEAKQLEDLSPEAIKIFLHEQLRIAYDLKEAQIDQIQPGLMRQAERYFILQQIDTLWREHLQAMEALRESVGLRGYGQKDPLLEYKSEGYELFLEMMTAIRRNVIYSMFMFDPQPQARPQAEVV</sequence>
<gene>
    <name evidence="1" type="primary">secA</name>
    <name type="ordered locus">Synpcc7942_0289</name>
</gene>
<name>SECA_SYNE7</name>
<keyword id="KW-0067">ATP-binding</keyword>
<keyword id="KW-0997">Cell inner membrane</keyword>
<keyword id="KW-1003">Cell membrane</keyword>
<keyword id="KW-0963">Cytoplasm</keyword>
<keyword id="KW-0472">Membrane</keyword>
<keyword id="KW-0547">Nucleotide-binding</keyword>
<keyword id="KW-0653">Protein transport</keyword>
<keyword id="KW-1185">Reference proteome</keyword>
<keyword id="KW-0793">Thylakoid</keyword>
<keyword id="KW-1278">Translocase</keyword>
<keyword id="KW-0811">Translocation</keyword>
<keyword id="KW-0813">Transport</keyword>
<comment type="function">
    <text evidence="1">Part of the Sec protein translocase complex. Interacts with the SecYEG preprotein conducting channel. Has a central role in coupling the hydrolysis of ATP to the transfer of proteins into and across the cell membrane, serving as an ATP-driven molecular motor driving the stepwise translocation of polypeptide chains across the membrane.</text>
</comment>
<comment type="function">
    <text evidence="1">Probably participates in protein translocation into and across both the cytoplasmic and thylakoid membranes in cyanobacterial cells.</text>
</comment>
<comment type="catalytic activity">
    <reaction evidence="1">
        <text>ATP + H2O + cellular proteinSide 1 = ADP + phosphate + cellular proteinSide 2.</text>
        <dbReference type="EC" id="7.4.2.8"/>
    </reaction>
</comment>
<comment type="subunit">
    <text evidence="1">Monomer and homodimer. Part of the essential Sec protein translocation apparatus which comprises SecA, SecYEG and auxiliary proteins SecDF. Other proteins may also be involved.</text>
</comment>
<comment type="subcellular location">
    <subcellularLocation>
        <location evidence="1">Cell inner membrane</location>
        <topology evidence="1">Peripheral membrane protein</topology>
        <orientation evidence="1">Cytoplasmic side</orientation>
    </subcellularLocation>
    <subcellularLocation>
        <location evidence="1">Cellular thylakoid membrane</location>
        <topology evidence="1">Peripheral membrane protein</topology>
        <orientation evidence="1">Cytoplasmic side</orientation>
    </subcellularLocation>
    <subcellularLocation>
        <location evidence="1">Cytoplasm</location>
    </subcellularLocation>
</comment>
<comment type="similarity">
    <text evidence="1">Belongs to the SecA family.</text>
</comment>
<feature type="chain" id="PRO_0000109617" description="Protein translocase subunit SecA">
    <location>
        <begin position="1"/>
        <end position="948"/>
    </location>
</feature>
<feature type="binding site" evidence="1">
    <location>
        <position position="91"/>
    </location>
    <ligand>
        <name>ATP</name>
        <dbReference type="ChEBI" id="CHEBI:30616"/>
    </ligand>
</feature>
<feature type="binding site" evidence="1">
    <location>
        <begin position="109"/>
        <end position="113"/>
    </location>
    <ligand>
        <name>ATP</name>
        <dbReference type="ChEBI" id="CHEBI:30616"/>
    </ligand>
</feature>
<feature type="binding site" evidence="1">
    <location>
        <position position="509"/>
    </location>
    <ligand>
        <name>ATP</name>
        <dbReference type="ChEBI" id="CHEBI:30616"/>
    </ligand>
</feature>
<dbReference type="EC" id="7.4.2.8" evidence="1"/>
<dbReference type="EMBL" id="X74592">
    <property type="protein sequence ID" value="CAA52669.1"/>
    <property type="molecule type" value="Genomic_DNA"/>
</dbReference>
<dbReference type="EMBL" id="CP000100">
    <property type="protein sequence ID" value="ABB56321.1"/>
    <property type="molecule type" value="Genomic_DNA"/>
</dbReference>
<dbReference type="RefSeq" id="WP_011243535.1">
    <property type="nucleotide sequence ID" value="NZ_JACJTX010000002.1"/>
</dbReference>
<dbReference type="SMR" id="Q55357"/>
<dbReference type="STRING" id="1140.Synpcc7942_0289"/>
<dbReference type="PaxDb" id="1140-Synpcc7942_0289"/>
<dbReference type="GeneID" id="72429104"/>
<dbReference type="KEGG" id="syf:Synpcc7942_0289"/>
<dbReference type="eggNOG" id="COG0653">
    <property type="taxonomic scope" value="Bacteria"/>
</dbReference>
<dbReference type="HOGENOM" id="CLU_005314_3_0_3"/>
<dbReference type="OrthoDB" id="9805579at2"/>
<dbReference type="BioCyc" id="SYNEL:SYNPCC7942_0289-MONOMER"/>
<dbReference type="Proteomes" id="UP000889800">
    <property type="component" value="Chromosome"/>
</dbReference>
<dbReference type="GO" id="GO:0031522">
    <property type="term" value="C:cell envelope Sec protein transport complex"/>
    <property type="evidence" value="ECO:0007669"/>
    <property type="project" value="TreeGrafter"/>
</dbReference>
<dbReference type="GO" id="GO:0005829">
    <property type="term" value="C:cytosol"/>
    <property type="evidence" value="ECO:0007669"/>
    <property type="project" value="TreeGrafter"/>
</dbReference>
<dbReference type="GO" id="GO:0031676">
    <property type="term" value="C:plasma membrane-derived thylakoid membrane"/>
    <property type="evidence" value="ECO:0007669"/>
    <property type="project" value="UniProtKB-SubCell"/>
</dbReference>
<dbReference type="GO" id="GO:0005524">
    <property type="term" value="F:ATP binding"/>
    <property type="evidence" value="ECO:0007669"/>
    <property type="project" value="UniProtKB-UniRule"/>
</dbReference>
<dbReference type="GO" id="GO:0008564">
    <property type="term" value="F:protein-exporting ATPase activity"/>
    <property type="evidence" value="ECO:0007669"/>
    <property type="project" value="UniProtKB-EC"/>
</dbReference>
<dbReference type="GO" id="GO:0065002">
    <property type="term" value="P:intracellular protein transmembrane transport"/>
    <property type="evidence" value="ECO:0007669"/>
    <property type="project" value="UniProtKB-UniRule"/>
</dbReference>
<dbReference type="GO" id="GO:0017038">
    <property type="term" value="P:protein import"/>
    <property type="evidence" value="ECO:0007669"/>
    <property type="project" value="InterPro"/>
</dbReference>
<dbReference type="GO" id="GO:0006605">
    <property type="term" value="P:protein targeting"/>
    <property type="evidence" value="ECO:0007669"/>
    <property type="project" value="UniProtKB-UniRule"/>
</dbReference>
<dbReference type="GO" id="GO:0043952">
    <property type="term" value="P:protein transport by the Sec complex"/>
    <property type="evidence" value="ECO:0007669"/>
    <property type="project" value="TreeGrafter"/>
</dbReference>
<dbReference type="CDD" id="cd17928">
    <property type="entry name" value="DEXDc_SecA"/>
    <property type="match status" value="1"/>
</dbReference>
<dbReference type="CDD" id="cd18803">
    <property type="entry name" value="SF2_C_secA"/>
    <property type="match status" value="1"/>
</dbReference>
<dbReference type="FunFam" id="3.90.1440.10:FF:000003">
    <property type="entry name" value="Preprotein translocase SecA subunit"/>
    <property type="match status" value="1"/>
</dbReference>
<dbReference type="FunFam" id="3.40.50.300:FF:000429">
    <property type="entry name" value="Preprotein translocase subunit SecA"/>
    <property type="match status" value="1"/>
</dbReference>
<dbReference type="FunFam" id="1.10.3060.10:FF:000003">
    <property type="entry name" value="Protein translocase subunit SecA"/>
    <property type="match status" value="1"/>
</dbReference>
<dbReference type="FunFam" id="3.40.50.300:FF:000334">
    <property type="entry name" value="Protein translocase subunit SecA"/>
    <property type="match status" value="1"/>
</dbReference>
<dbReference type="Gene3D" id="1.10.3060.10">
    <property type="entry name" value="Helical scaffold and wing domains of SecA"/>
    <property type="match status" value="1"/>
</dbReference>
<dbReference type="Gene3D" id="3.40.50.300">
    <property type="entry name" value="P-loop containing nucleotide triphosphate hydrolases"/>
    <property type="match status" value="2"/>
</dbReference>
<dbReference type="Gene3D" id="3.90.1440.10">
    <property type="entry name" value="SecA, preprotein cross-linking domain"/>
    <property type="match status" value="1"/>
</dbReference>
<dbReference type="HAMAP" id="MF_01382">
    <property type="entry name" value="SecA"/>
    <property type="match status" value="1"/>
</dbReference>
<dbReference type="InterPro" id="IPR014001">
    <property type="entry name" value="Helicase_ATP-bd"/>
</dbReference>
<dbReference type="InterPro" id="IPR027417">
    <property type="entry name" value="P-loop_NTPase"/>
</dbReference>
<dbReference type="InterPro" id="IPR000185">
    <property type="entry name" value="SecA"/>
</dbReference>
<dbReference type="InterPro" id="IPR020937">
    <property type="entry name" value="SecA_CS"/>
</dbReference>
<dbReference type="InterPro" id="IPR011115">
    <property type="entry name" value="SecA_DEAD"/>
</dbReference>
<dbReference type="InterPro" id="IPR014018">
    <property type="entry name" value="SecA_motor_DEAD"/>
</dbReference>
<dbReference type="InterPro" id="IPR011130">
    <property type="entry name" value="SecA_preprotein_X-link_dom"/>
</dbReference>
<dbReference type="InterPro" id="IPR044722">
    <property type="entry name" value="SecA_SF2_C"/>
</dbReference>
<dbReference type="InterPro" id="IPR011116">
    <property type="entry name" value="SecA_Wing/Scaffold"/>
</dbReference>
<dbReference type="InterPro" id="IPR036266">
    <property type="entry name" value="SecA_Wing/Scaffold_sf"/>
</dbReference>
<dbReference type="InterPro" id="IPR036670">
    <property type="entry name" value="SecA_X-link_sf"/>
</dbReference>
<dbReference type="NCBIfam" id="TIGR00963">
    <property type="entry name" value="secA"/>
    <property type="match status" value="1"/>
</dbReference>
<dbReference type="PANTHER" id="PTHR30612:SF0">
    <property type="entry name" value="CHLOROPLAST PROTEIN-TRANSPORTING ATPASE"/>
    <property type="match status" value="1"/>
</dbReference>
<dbReference type="PANTHER" id="PTHR30612">
    <property type="entry name" value="SECA INNER MEMBRANE COMPONENT OF SEC PROTEIN SECRETION SYSTEM"/>
    <property type="match status" value="1"/>
</dbReference>
<dbReference type="Pfam" id="PF21090">
    <property type="entry name" value="P-loop_SecA"/>
    <property type="match status" value="1"/>
</dbReference>
<dbReference type="Pfam" id="PF07517">
    <property type="entry name" value="SecA_DEAD"/>
    <property type="match status" value="1"/>
</dbReference>
<dbReference type="Pfam" id="PF01043">
    <property type="entry name" value="SecA_PP_bind"/>
    <property type="match status" value="1"/>
</dbReference>
<dbReference type="Pfam" id="PF07516">
    <property type="entry name" value="SecA_SW"/>
    <property type="match status" value="1"/>
</dbReference>
<dbReference type="PRINTS" id="PR00906">
    <property type="entry name" value="SECA"/>
</dbReference>
<dbReference type="SMART" id="SM00957">
    <property type="entry name" value="SecA_DEAD"/>
    <property type="match status" value="1"/>
</dbReference>
<dbReference type="SMART" id="SM00958">
    <property type="entry name" value="SecA_PP_bind"/>
    <property type="match status" value="1"/>
</dbReference>
<dbReference type="SUPFAM" id="SSF81886">
    <property type="entry name" value="Helical scaffold and wing domains of SecA"/>
    <property type="match status" value="1"/>
</dbReference>
<dbReference type="SUPFAM" id="SSF52540">
    <property type="entry name" value="P-loop containing nucleoside triphosphate hydrolases"/>
    <property type="match status" value="2"/>
</dbReference>
<dbReference type="SUPFAM" id="SSF81767">
    <property type="entry name" value="Pre-protein crosslinking domain of SecA"/>
    <property type="match status" value="1"/>
</dbReference>
<dbReference type="PROSITE" id="PS01312">
    <property type="entry name" value="SECA"/>
    <property type="match status" value="1"/>
</dbReference>
<dbReference type="PROSITE" id="PS51196">
    <property type="entry name" value="SECA_MOTOR_DEAD"/>
    <property type="match status" value="1"/>
</dbReference>
<organism>
    <name type="scientific">Synechococcus elongatus (strain ATCC 33912 / PCC 7942 / FACHB-805)</name>
    <name type="common">Anacystis nidulans R2</name>
    <dbReference type="NCBI Taxonomy" id="1140"/>
    <lineage>
        <taxon>Bacteria</taxon>
        <taxon>Bacillati</taxon>
        <taxon>Cyanobacteriota</taxon>
        <taxon>Cyanophyceae</taxon>
        <taxon>Synechococcales</taxon>
        <taxon>Synechococcaceae</taxon>
        <taxon>Synechococcus</taxon>
    </lineage>
</organism>